<organism>
    <name type="scientific">Aspergillus oryzae (strain ATCC 42149 / RIB 40)</name>
    <name type="common">Yellow koji mold</name>
    <dbReference type="NCBI Taxonomy" id="510516"/>
    <lineage>
        <taxon>Eukaryota</taxon>
        <taxon>Fungi</taxon>
        <taxon>Dikarya</taxon>
        <taxon>Ascomycota</taxon>
        <taxon>Pezizomycotina</taxon>
        <taxon>Eurotiomycetes</taxon>
        <taxon>Eurotiomycetidae</taxon>
        <taxon>Eurotiales</taxon>
        <taxon>Aspergillaceae</taxon>
        <taxon>Aspergillus</taxon>
        <taxon>Aspergillus subgen. Circumdati</taxon>
    </lineage>
</organism>
<evidence type="ECO:0000250" key="1"/>
<evidence type="ECO:0000255" key="2">
    <source>
        <dbReference type="PROSITE-ProRule" id="PRU00042"/>
    </source>
</evidence>
<evidence type="ECO:0000256" key="3">
    <source>
        <dbReference type="SAM" id="MobiDB-lite"/>
    </source>
</evidence>
<evidence type="ECO:0000305" key="4"/>
<dbReference type="EMBL" id="AB035899">
    <property type="protein sequence ID" value="BAB20756.1"/>
    <property type="molecule type" value="Genomic_DNA"/>
</dbReference>
<dbReference type="EMBL" id="BA000050">
    <property type="protein sequence ID" value="BAE57899.1"/>
    <property type="molecule type" value="Genomic_DNA"/>
</dbReference>
<dbReference type="RefSeq" id="XP_001819901.1">
    <property type="nucleotide sequence ID" value="XM_001819849.2"/>
</dbReference>
<dbReference type="SMR" id="Q9HFB3"/>
<dbReference type="STRING" id="510516.Q9HFB3"/>
<dbReference type="EnsemblFungi" id="BAE57899">
    <property type="protein sequence ID" value="BAE57899"/>
    <property type="gene ID" value="AO090003000758"/>
</dbReference>
<dbReference type="GeneID" id="5991884"/>
<dbReference type="KEGG" id="aor:AO090003000758"/>
<dbReference type="VEuPathDB" id="FungiDB:AO090003000758"/>
<dbReference type="HOGENOM" id="CLU_012842_1_0_1"/>
<dbReference type="OMA" id="QWGNCRT"/>
<dbReference type="OrthoDB" id="105541at5052"/>
<dbReference type="Proteomes" id="UP000006564">
    <property type="component" value="Chromosome 2"/>
</dbReference>
<dbReference type="GO" id="GO:0005737">
    <property type="term" value="C:cytoplasm"/>
    <property type="evidence" value="ECO:0007669"/>
    <property type="project" value="UniProtKB-SubCell"/>
</dbReference>
<dbReference type="GO" id="GO:0005634">
    <property type="term" value="C:nucleus"/>
    <property type="evidence" value="ECO:0007669"/>
    <property type="project" value="UniProtKB-SubCell"/>
</dbReference>
<dbReference type="GO" id="GO:0003677">
    <property type="term" value="F:DNA binding"/>
    <property type="evidence" value="ECO:0007669"/>
    <property type="project" value="UniProtKB-KW"/>
</dbReference>
<dbReference type="GO" id="GO:0008270">
    <property type="term" value="F:zinc ion binding"/>
    <property type="evidence" value="ECO:0007669"/>
    <property type="project" value="UniProtKB-KW"/>
</dbReference>
<dbReference type="GO" id="GO:0045944">
    <property type="term" value="P:positive regulation of transcription by RNA polymerase II"/>
    <property type="evidence" value="ECO:0007669"/>
    <property type="project" value="TreeGrafter"/>
</dbReference>
<dbReference type="FunFam" id="3.30.160.60:FF:000993">
    <property type="entry name" value="pH-response transcription factor pacC/RIM101"/>
    <property type="match status" value="1"/>
</dbReference>
<dbReference type="FunFam" id="3.30.160.60:FF:001369">
    <property type="entry name" value="pH-response transcription factor pacC/RIM101"/>
    <property type="match status" value="1"/>
</dbReference>
<dbReference type="Gene3D" id="3.30.160.60">
    <property type="entry name" value="Classic Zinc Finger"/>
    <property type="match status" value="2"/>
</dbReference>
<dbReference type="InterPro" id="IPR050806">
    <property type="entry name" value="pacC/RIM101"/>
</dbReference>
<dbReference type="InterPro" id="IPR036236">
    <property type="entry name" value="Znf_C2H2_sf"/>
</dbReference>
<dbReference type="InterPro" id="IPR013087">
    <property type="entry name" value="Znf_C2H2_type"/>
</dbReference>
<dbReference type="PANTHER" id="PTHR47257">
    <property type="entry name" value="PH-RESPONSE TRANSCRIPTION FACTOR PACC/RIM101"/>
    <property type="match status" value="1"/>
</dbReference>
<dbReference type="PANTHER" id="PTHR47257:SF1">
    <property type="entry name" value="PH-RESPONSE TRANSCRIPTION FACTOR PACC_RIM101"/>
    <property type="match status" value="1"/>
</dbReference>
<dbReference type="SMART" id="SM00355">
    <property type="entry name" value="ZnF_C2H2"/>
    <property type="match status" value="3"/>
</dbReference>
<dbReference type="SUPFAM" id="SSF57667">
    <property type="entry name" value="beta-beta-alpha zinc fingers"/>
    <property type="match status" value="1"/>
</dbReference>
<dbReference type="PROSITE" id="PS00028">
    <property type="entry name" value="ZINC_FINGER_C2H2_1"/>
    <property type="match status" value="2"/>
</dbReference>
<dbReference type="PROSITE" id="PS50157">
    <property type="entry name" value="ZINC_FINGER_C2H2_2"/>
    <property type="match status" value="2"/>
</dbReference>
<comment type="function">
    <text evidence="1">Transcription factor that mediates regulation of both acid- and alkaline-expressed genes in response to ambient pH. At alkaline ambient pH, activates transcription of alkaline-expressed genes (including pacC itself) and represses transcription of acid-expressed genes (By similarity).</text>
</comment>
<comment type="subunit">
    <text evidence="1">Binds to DNA. Interacts with palA, which binds to the two YPX[LI] motifs and is required for proteolytic processing (By similarity).</text>
</comment>
<comment type="subcellular location">
    <subcellularLocation>
        <location evidence="1">Cytoplasm</location>
    </subcellularLocation>
    <subcellularLocation>
        <location evidence="1">Nucleus</location>
    </subcellularLocation>
</comment>
<comment type="PTM">
    <text evidence="1">Activated by C-terminal proteolytic cleavage by signaling protease (probably palB/RIM13) at neutral to alkaline ambient pH.</text>
</comment>
<comment type="similarity">
    <text evidence="4">Belongs to the pacC/RIM101 family.</text>
</comment>
<sequence length="662" mass="70801">MSEPQDTTSPSTAAAPIAASTSHEQPQTQSPPQVSATTTSSVTATAAAATAAVASPPVNGAARPTEELSCLWQGCSEKCPTPESLYEHVCERHVGRKSTNNLNLTCQWGSCRTTTVKRDHITSHIRVHVPLKPHKCDFCGKAFKRPQDLKKHVKTHADDSVLVRSPEPGSRNPDIMFGGNPAKGYATATHYFEPALNPVPSQGYAHGAPQYYQSHHPPQPANPSYGNVYYALNHGHEAGHASYESKKRGYDALNEFFGDLKRRQFDPNSYAAVGQRLLGLQSLSLPILSGGPLPEYQPMPAPVAVGGGGYSPGGHPPAPAYHLPPMSNVRTKNDLINIDQFLQQMQDTIYENDDNVAAAGVAQPGAHYVHGGMSYRTTHSPPSQLPPSHATATTSAGPIMANPATHSPTGTPALTPPSSAQSYTSGRSPISLPSTSRVSPPHHEGGSSMYPRLPSATMSDSMAAGYPTTSSAAPPSTLGGIFDHDDRRRYTGGTLQRARPEERHLPEPMDLSHDNKDDGERTPPAKPRQAPSSPGRISASLIDPALSGSANEAETMRTAQAATEVAERSDVQWVEKVRLIEYLRNYIASRLERGEYDGDSGMTRESRTPEAGPDGHMEGVETEPVSHPAKCESPVKPEAGGDTVMYPTLRGVDEDGDSKMPN</sequence>
<proteinExistence type="inferred from homology"/>
<reference key="1">
    <citation type="submission" date="1999-12" db="EMBL/GenBank/DDBJ databases">
        <title>Cloning of a genomic DNA for pacC from Aspergillus oryzae.</title>
        <authorList>
            <person name="Sano M."/>
            <person name="Machida M."/>
        </authorList>
    </citation>
    <scope>NUCLEOTIDE SEQUENCE [GENOMIC DNA]</scope>
    <source>
        <strain>ATCC 42149 / RIB 40</strain>
    </source>
</reference>
<reference key="2">
    <citation type="journal article" date="2005" name="Nature">
        <title>Genome sequencing and analysis of Aspergillus oryzae.</title>
        <authorList>
            <person name="Machida M."/>
            <person name="Asai K."/>
            <person name="Sano M."/>
            <person name="Tanaka T."/>
            <person name="Kumagai T."/>
            <person name="Terai G."/>
            <person name="Kusumoto K."/>
            <person name="Arima T."/>
            <person name="Akita O."/>
            <person name="Kashiwagi Y."/>
            <person name="Abe K."/>
            <person name="Gomi K."/>
            <person name="Horiuchi H."/>
            <person name="Kitamoto K."/>
            <person name="Kobayashi T."/>
            <person name="Takeuchi M."/>
            <person name="Denning D.W."/>
            <person name="Galagan J.E."/>
            <person name="Nierman W.C."/>
            <person name="Yu J."/>
            <person name="Archer D.B."/>
            <person name="Bennett J.W."/>
            <person name="Bhatnagar D."/>
            <person name="Cleveland T.E."/>
            <person name="Fedorova N.D."/>
            <person name="Gotoh O."/>
            <person name="Horikawa H."/>
            <person name="Hosoyama A."/>
            <person name="Ichinomiya M."/>
            <person name="Igarashi R."/>
            <person name="Iwashita K."/>
            <person name="Juvvadi P.R."/>
            <person name="Kato M."/>
            <person name="Kato Y."/>
            <person name="Kin T."/>
            <person name="Kokubun A."/>
            <person name="Maeda H."/>
            <person name="Maeyama N."/>
            <person name="Maruyama J."/>
            <person name="Nagasaki H."/>
            <person name="Nakajima T."/>
            <person name="Oda K."/>
            <person name="Okada K."/>
            <person name="Paulsen I."/>
            <person name="Sakamoto K."/>
            <person name="Sawano T."/>
            <person name="Takahashi M."/>
            <person name="Takase K."/>
            <person name="Terabayashi Y."/>
            <person name="Wortman J.R."/>
            <person name="Yamada O."/>
            <person name="Yamagata Y."/>
            <person name="Anazawa H."/>
            <person name="Hata Y."/>
            <person name="Koide Y."/>
            <person name="Komori T."/>
            <person name="Koyama Y."/>
            <person name="Minetoki T."/>
            <person name="Suharnan S."/>
            <person name="Tanaka A."/>
            <person name="Isono K."/>
            <person name="Kuhara S."/>
            <person name="Ogasawara N."/>
            <person name="Kikuchi H."/>
        </authorList>
    </citation>
    <scope>NUCLEOTIDE SEQUENCE [LARGE SCALE GENOMIC DNA]</scope>
    <source>
        <strain>ATCC 42149 / RIB 40</strain>
    </source>
</reference>
<gene>
    <name type="primary">pacC</name>
    <name type="ORF">AO090003000758</name>
</gene>
<accession>Q9HFB3</accession>
<accession>Q2UKL6</accession>
<feature type="chain" id="PRO_0000046822" description="pH-response transcription factor pacC/RIM101">
    <location>
        <begin position="1"/>
        <end position="662"/>
    </location>
</feature>
<feature type="zinc finger region" description="C2H2-type 1" evidence="2">
    <location>
        <begin position="68"/>
        <end position="93"/>
    </location>
</feature>
<feature type="zinc finger region" description="C2H2-type 2" evidence="2">
    <location>
        <begin position="104"/>
        <end position="128"/>
    </location>
</feature>
<feature type="zinc finger region" description="C2H2-type 3" evidence="2">
    <location>
        <begin position="134"/>
        <end position="156"/>
    </location>
</feature>
<feature type="region of interest" description="Disordered" evidence="3">
    <location>
        <begin position="1"/>
        <end position="43"/>
    </location>
</feature>
<feature type="region of interest" description="Disordered" evidence="3">
    <location>
        <begin position="370"/>
        <end position="541"/>
    </location>
</feature>
<feature type="region of interest" description="Disordered" evidence="3">
    <location>
        <begin position="597"/>
        <end position="662"/>
    </location>
</feature>
<feature type="short sequence motif" description="YPX[LI] motif 1">
    <location>
        <begin position="450"/>
        <end position="453"/>
    </location>
</feature>
<feature type="short sequence motif" description="YPX[LI] motif 2">
    <location>
        <begin position="646"/>
        <end position="649"/>
    </location>
</feature>
<feature type="compositionally biased region" description="Low complexity" evidence="3">
    <location>
        <begin position="7"/>
        <end position="43"/>
    </location>
</feature>
<feature type="compositionally biased region" description="Polar residues" evidence="3">
    <location>
        <begin position="404"/>
        <end position="438"/>
    </location>
</feature>
<feature type="compositionally biased region" description="Basic and acidic residues" evidence="3">
    <location>
        <begin position="498"/>
        <end position="523"/>
    </location>
</feature>
<feature type="compositionally biased region" description="Basic and acidic residues" evidence="3">
    <location>
        <begin position="597"/>
        <end position="619"/>
    </location>
</feature>
<feature type="sequence conflict" description="In Ref. 1; BAB20756." evidence="4" ref="1">
    <original>A</original>
    <variation>T</variation>
    <location>
        <position position="271"/>
    </location>
</feature>
<protein>
    <recommendedName>
        <fullName>pH-response transcription factor pacC/RIM101</fullName>
    </recommendedName>
</protein>
<keyword id="KW-0010">Activator</keyword>
<keyword id="KW-0963">Cytoplasm</keyword>
<keyword id="KW-0238">DNA-binding</keyword>
<keyword id="KW-0479">Metal-binding</keyword>
<keyword id="KW-0539">Nucleus</keyword>
<keyword id="KW-1185">Reference proteome</keyword>
<keyword id="KW-0677">Repeat</keyword>
<keyword id="KW-0678">Repressor</keyword>
<keyword id="KW-0804">Transcription</keyword>
<keyword id="KW-0805">Transcription regulation</keyword>
<keyword id="KW-0862">Zinc</keyword>
<keyword id="KW-0863">Zinc-finger</keyword>
<name>PACC_ASPOR</name>